<evidence type="ECO:0000255" key="1">
    <source>
        <dbReference type="PROSITE-ProRule" id="PRU00176"/>
    </source>
</evidence>
<evidence type="ECO:0000256" key="2">
    <source>
        <dbReference type="SAM" id="MobiDB-lite"/>
    </source>
</evidence>
<organism>
    <name type="scientific">Rattus norvegicus</name>
    <name type="common">Rat</name>
    <dbReference type="NCBI Taxonomy" id="10116"/>
    <lineage>
        <taxon>Eukaryota</taxon>
        <taxon>Metazoa</taxon>
        <taxon>Chordata</taxon>
        <taxon>Craniata</taxon>
        <taxon>Vertebrata</taxon>
        <taxon>Euteleostomi</taxon>
        <taxon>Mammalia</taxon>
        <taxon>Eutheria</taxon>
        <taxon>Euarchontoglires</taxon>
        <taxon>Glires</taxon>
        <taxon>Rodentia</taxon>
        <taxon>Myomorpha</taxon>
        <taxon>Muroidea</taxon>
        <taxon>Muridae</taxon>
        <taxon>Murinae</taxon>
        <taxon>Rattus</taxon>
    </lineage>
</organism>
<reference key="1">
    <citation type="journal article" date="2004" name="Genome Res.">
        <title>The status, quality, and expansion of the NIH full-length cDNA project: the Mammalian Gene Collection (MGC).</title>
        <authorList>
            <consortium name="The MGC Project Team"/>
        </authorList>
    </citation>
    <scope>NUCLEOTIDE SEQUENCE [LARGE SCALE MRNA]</scope>
    <source>
        <tissue>Prostate</tissue>
    </source>
</reference>
<dbReference type="EMBL" id="BC107648">
    <property type="protein sequence ID" value="AAI07649.1"/>
    <property type="molecule type" value="mRNA"/>
</dbReference>
<dbReference type="RefSeq" id="NP_001032738.1">
    <property type="nucleotide sequence ID" value="NM_001037649.1"/>
</dbReference>
<dbReference type="SMR" id="Q3B7D9"/>
<dbReference type="FunCoup" id="Q3B7D9">
    <property type="interactions" value="463"/>
</dbReference>
<dbReference type="STRING" id="10116.ENSRNOP00000006172"/>
<dbReference type="PhosphoSitePlus" id="Q3B7D9"/>
<dbReference type="PaxDb" id="10116-ENSRNOP00000006172"/>
<dbReference type="GeneID" id="311020"/>
<dbReference type="KEGG" id="rno:311020"/>
<dbReference type="UCSC" id="RGD:1306676">
    <property type="organism name" value="rat"/>
</dbReference>
<dbReference type="AGR" id="RGD:1306676"/>
<dbReference type="CTD" id="375287"/>
<dbReference type="RGD" id="1306676">
    <property type="gene designation" value="Rbm43"/>
</dbReference>
<dbReference type="eggNOG" id="KOG4012">
    <property type="taxonomic scope" value="Eukaryota"/>
</dbReference>
<dbReference type="InParanoid" id="Q3B7D9"/>
<dbReference type="OrthoDB" id="9948435at2759"/>
<dbReference type="PhylomeDB" id="Q3B7D9"/>
<dbReference type="PRO" id="PR:Q3B7D9"/>
<dbReference type="Proteomes" id="UP000002494">
    <property type="component" value="Unplaced"/>
</dbReference>
<dbReference type="GO" id="GO:0003723">
    <property type="term" value="F:RNA binding"/>
    <property type="evidence" value="ECO:0007669"/>
    <property type="project" value="UniProtKB-KW"/>
</dbReference>
<dbReference type="Gene3D" id="3.30.70.330">
    <property type="match status" value="1"/>
</dbReference>
<dbReference type="InterPro" id="IPR012677">
    <property type="entry name" value="Nucleotide-bd_a/b_plait_sf"/>
</dbReference>
<dbReference type="InterPro" id="IPR035979">
    <property type="entry name" value="RBD_domain_sf"/>
</dbReference>
<dbReference type="InterPro" id="IPR000504">
    <property type="entry name" value="RRM_dom"/>
</dbReference>
<dbReference type="PANTHER" id="PTHR15225">
    <property type="entry name" value="INTERFERON-INDUCED PROTEIN 35/NMI N-MYC/STAT INTERACTING PROTEIN"/>
    <property type="match status" value="1"/>
</dbReference>
<dbReference type="PANTHER" id="PTHR15225:SF8">
    <property type="entry name" value="RNA-BINDING PROTEIN 43"/>
    <property type="match status" value="1"/>
</dbReference>
<dbReference type="Pfam" id="PF23085">
    <property type="entry name" value="RRM_PARP14_3"/>
    <property type="match status" value="1"/>
</dbReference>
<dbReference type="SUPFAM" id="SSF54928">
    <property type="entry name" value="RNA-binding domain, RBD"/>
    <property type="match status" value="1"/>
</dbReference>
<dbReference type="PROSITE" id="PS50102">
    <property type="entry name" value="RRM"/>
    <property type="match status" value="1"/>
</dbReference>
<proteinExistence type="evidence at transcript level"/>
<gene>
    <name type="primary">Rbm43</name>
</gene>
<keyword id="KW-1185">Reference proteome</keyword>
<keyword id="KW-0694">RNA-binding</keyword>
<feature type="chain" id="PRO_0000264249" description="RNA-binding protein 43">
    <location>
        <begin position="1"/>
        <end position="343"/>
    </location>
</feature>
<feature type="domain" description="RRM" evidence="1">
    <location>
        <begin position="15"/>
        <end position="90"/>
    </location>
</feature>
<feature type="region of interest" description="Disordered" evidence="2">
    <location>
        <begin position="170"/>
        <end position="200"/>
    </location>
</feature>
<feature type="compositionally biased region" description="Polar residues" evidence="2">
    <location>
        <begin position="184"/>
        <end position="194"/>
    </location>
</feature>
<accession>Q3B7D9</accession>
<protein>
    <recommendedName>
        <fullName>RNA-binding protein 43</fullName>
    </recommendedName>
    <alternativeName>
        <fullName>RNA-binding motif protein 43</fullName>
    </alternativeName>
</protein>
<sequence>MASALTVKDPTVSERTVVVSGLPVGLSKDQLVKRYFRDEGGHVEKVIYPPRSKGVAYIIFKEKKVAQTIIRQKKHSLGSEPLLTVSHFSEKVFNYVMAILDLSVFRPQIVLESLVVDLKKKIPTLNFSPLGRSGKISVQGSFLAILKLKQALISKAISALENNRKYAGERRNWTGQNPRRVLQKNENSAPTLGTSVPEPAGSPETLVLDTDVFLYLKHKCQFYEPTLSKYHVLCQERVDGDITTLCLQDARDGSYPGSVRHVKELIEEWAQEFYLELRKELLVLEGRRESEKRNMRQAFEQLCCRYPRVLMNVHRTHIDLIGPPSDTSLFKTQLMKSAGQKVT</sequence>
<name>RBM43_RAT</name>